<sequence>MDKFRVQGPTKLQGEVTISGAKNAALPILFAALLAEEPVEIQNVPKLKDVDTSMKLLSQLGAKVERNGSVHIDARDVNVFCAPYDLVKTMRASIWALGPLVARFGQGQVSLPGGCTIGARPVDLHISGLEQLGATIKLEEGYVKASVDGRLKGAHIVMDKVSVGATVTIMCAATLAEGTTIIENAAREPEIVDTANFLITLGAKISGQGTDRIVIEGVERLGGGVYRVLPDRIETGTFLVAAAISRGKIICRNAQPDTLDAVLAKLRDAGADIEVGEDWISLDMHGKRPKAVNVRTAPHPAFPTDMQAQFTLLNLVAEGTGFITETVFENRFMHVPELSRMGAHAEIESNTVICHGVEKLSGAQVMATDLRASASLVLAGCIAEGTTVVDRIYHIDRGYERIEDKLRALGANIERVKGE</sequence>
<protein>
    <recommendedName>
        <fullName evidence="1">UDP-N-acetylglucosamine 1-carboxyvinyltransferase</fullName>
        <ecNumber evidence="1">2.5.1.7</ecNumber>
    </recommendedName>
    <alternativeName>
        <fullName evidence="1">Enoylpyruvate transferase</fullName>
    </alternativeName>
    <alternativeName>
        <fullName evidence="1">UDP-N-acetylglucosamine enolpyruvyl transferase</fullName>
        <shortName evidence="1">EPT</shortName>
    </alternativeName>
</protein>
<feature type="chain" id="PRO_0000231263" description="UDP-N-acetylglucosamine 1-carboxyvinyltransferase">
    <location>
        <begin position="1"/>
        <end position="419"/>
    </location>
</feature>
<feature type="active site" description="Proton donor" evidence="1">
    <location>
        <position position="115"/>
    </location>
</feature>
<feature type="binding site" evidence="1">
    <location>
        <begin position="22"/>
        <end position="23"/>
    </location>
    <ligand>
        <name>phosphoenolpyruvate</name>
        <dbReference type="ChEBI" id="CHEBI:58702"/>
    </ligand>
</feature>
<feature type="binding site" evidence="1">
    <location>
        <position position="91"/>
    </location>
    <ligand>
        <name>UDP-N-acetyl-alpha-D-glucosamine</name>
        <dbReference type="ChEBI" id="CHEBI:57705"/>
    </ligand>
</feature>
<feature type="binding site" evidence="1">
    <location>
        <begin position="120"/>
        <end position="124"/>
    </location>
    <ligand>
        <name>UDP-N-acetyl-alpha-D-glucosamine</name>
        <dbReference type="ChEBI" id="CHEBI:57705"/>
    </ligand>
</feature>
<feature type="binding site" evidence="1">
    <location>
        <begin position="160"/>
        <end position="163"/>
    </location>
    <ligand>
        <name>UDP-N-acetyl-alpha-D-glucosamine</name>
        <dbReference type="ChEBI" id="CHEBI:57705"/>
    </ligand>
</feature>
<feature type="binding site" evidence="1">
    <location>
        <position position="305"/>
    </location>
    <ligand>
        <name>UDP-N-acetyl-alpha-D-glucosamine</name>
        <dbReference type="ChEBI" id="CHEBI:57705"/>
    </ligand>
</feature>
<feature type="binding site" evidence="1">
    <location>
        <position position="327"/>
    </location>
    <ligand>
        <name>UDP-N-acetyl-alpha-D-glucosamine</name>
        <dbReference type="ChEBI" id="CHEBI:57705"/>
    </ligand>
</feature>
<feature type="modified residue" description="2-(S-cysteinyl)pyruvic acid O-phosphothioketal" evidence="1">
    <location>
        <position position="115"/>
    </location>
</feature>
<keyword id="KW-0131">Cell cycle</keyword>
<keyword id="KW-0132">Cell division</keyword>
<keyword id="KW-0133">Cell shape</keyword>
<keyword id="KW-0961">Cell wall biogenesis/degradation</keyword>
<keyword id="KW-0963">Cytoplasm</keyword>
<keyword id="KW-0573">Peptidoglycan synthesis</keyword>
<keyword id="KW-0670">Pyruvate</keyword>
<keyword id="KW-1185">Reference proteome</keyword>
<keyword id="KW-0808">Transferase</keyword>
<name>MURA_SHISS</name>
<evidence type="ECO:0000255" key="1">
    <source>
        <dbReference type="HAMAP-Rule" id="MF_00111"/>
    </source>
</evidence>
<comment type="function">
    <text evidence="1">Cell wall formation. Adds enolpyruvyl to UDP-N-acetylglucosamine.</text>
</comment>
<comment type="catalytic activity">
    <reaction evidence="1">
        <text>phosphoenolpyruvate + UDP-N-acetyl-alpha-D-glucosamine = UDP-N-acetyl-3-O-(1-carboxyvinyl)-alpha-D-glucosamine + phosphate</text>
        <dbReference type="Rhea" id="RHEA:18681"/>
        <dbReference type="ChEBI" id="CHEBI:43474"/>
        <dbReference type="ChEBI" id="CHEBI:57705"/>
        <dbReference type="ChEBI" id="CHEBI:58702"/>
        <dbReference type="ChEBI" id="CHEBI:68483"/>
        <dbReference type="EC" id="2.5.1.7"/>
    </reaction>
</comment>
<comment type="pathway">
    <text evidence="1">Cell wall biogenesis; peptidoglycan biosynthesis.</text>
</comment>
<comment type="subcellular location">
    <subcellularLocation>
        <location evidence="1">Cytoplasm</location>
    </subcellularLocation>
</comment>
<comment type="similarity">
    <text evidence="1">Belongs to the EPSP synthase family. MurA subfamily.</text>
</comment>
<dbReference type="EC" id="2.5.1.7" evidence="1"/>
<dbReference type="EMBL" id="CP000038">
    <property type="protein sequence ID" value="AAZ89910.1"/>
    <property type="molecule type" value="Genomic_DNA"/>
</dbReference>
<dbReference type="RefSeq" id="WP_000357259.1">
    <property type="nucleotide sequence ID" value="NC_007384.1"/>
</dbReference>
<dbReference type="SMR" id="Q3YX52"/>
<dbReference type="GeneID" id="93778792"/>
<dbReference type="KEGG" id="ssn:SSON_3337"/>
<dbReference type="HOGENOM" id="CLU_027387_0_0_6"/>
<dbReference type="UniPathway" id="UPA00219"/>
<dbReference type="Proteomes" id="UP000002529">
    <property type="component" value="Chromosome"/>
</dbReference>
<dbReference type="GO" id="GO:0005737">
    <property type="term" value="C:cytoplasm"/>
    <property type="evidence" value="ECO:0007669"/>
    <property type="project" value="UniProtKB-SubCell"/>
</dbReference>
<dbReference type="GO" id="GO:0008760">
    <property type="term" value="F:UDP-N-acetylglucosamine 1-carboxyvinyltransferase activity"/>
    <property type="evidence" value="ECO:0007669"/>
    <property type="project" value="UniProtKB-UniRule"/>
</dbReference>
<dbReference type="GO" id="GO:0051301">
    <property type="term" value="P:cell division"/>
    <property type="evidence" value="ECO:0007669"/>
    <property type="project" value="UniProtKB-KW"/>
</dbReference>
<dbReference type="GO" id="GO:0071555">
    <property type="term" value="P:cell wall organization"/>
    <property type="evidence" value="ECO:0007669"/>
    <property type="project" value="UniProtKB-KW"/>
</dbReference>
<dbReference type="GO" id="GO:0009252">
    <property type="term" value="P:peptidoglycan biosynthetic process"/>
    <property type="evidence" value="ECO:0007669"/>
    <property type="project" value="UniProtKB-UniRule"/>
</dbReference>
<dbReference type="GO" id="GO:0008360">
    <property type="term" value="P:regulation of cell shape"/>
    <property type="evidence" value="ECO:0007669"/>
    <property type="project" value="UniProtKB-KW"/>
</dbReference>
<dbReference type="GO" id="GO:0019277">
    <property type="term" value="P:UDP-N-acetylgalactosamine biosynthetic process"/>
    <property type="evidence" value="ECO:0007669"/>
    <property type="project" value="InterPro"/>
</dbReference>
<dbReference type="CDD" id="cd01555">
    <property type="entry name" value="UdpNAET"/>
    <property type="match status" value="1"/>
</dbReference>
<dbReference type="FunFam" id="3.65.10.10:FF:000002">
    <property type="entry name" value="UDP-N-acetylglucosamine 1-carboxyvinyltransferase"/>
    <property type="match status" value="1"/>
</dbReference>
<dbReference type="Gene3D" id="3.65.10.10">
    <property type="entry name" value="Enolpyruvate transferase domain"/>
    <property type="match status" value="2"/>
</dbReference>
<dbReference type="HAMAP" id="MF_00111">
    <property type="entry name" value="MurA"/>
    <property type="match status" value="1"/>
</dbReference>
<dbReference type="InterPro" id="IPR001986">
    <property type="entry name" value="Enolpyruvate_Tfrase_dom"/>
</dbReference>
<dbReference type="InterPro" id="IPR036968">
    <property type="entry name" value="Enolpyruvate_Tfrase_sf"/>
</dbReference>
<dbReference type="InterPro" id="IPR050068">
    <property type="entry name" value="MurA_subfamily"/>
</dbReference>
<dbReference type="InterPro" id="IPR013792">
    <property type="entry name" value="RNA3'P_cycl/enolpyr_Trfase_a/b"/>
</dbReference>
<dbReference type="InterPro" id="IPR005750">
    <property type="entry name" value="UDP_GlcNAc_COvinyl_MurA"/>
</dbReference>
<dbReference type="NCBIfam" id="TIGR01072">
    <property type="entry name" value="murA"/>
    <property type="match status" value="1"/>
</dbReference>
<dbReference type="NCBIfam" id="NF006873">
    <property type="entry name" value="PRK09369.1"/>
    <property type="match status" value="1"/>
</dbReference>
<dbReference type="PANTHER" id="PTHR43783">
    <property type="entry name" value="UDP-N-ACETYLGLUCOSAMINE 1-CARBOXYVINYLTRANSFERASE"/>
    <property type="match status" value="1"/>
</dbReference>
<dbReference type="PANTHER" id="PTHR43783:SF1">
    <property type="entry name" value="UDP-N-ACETYLGLUCOSAMINE 1-CARBOXYVINYLTRANSFERASE"/>
    <property type="match status" value="1"/>
</dbReference>
<dbReference type="Pfam" id="PF00275">
    <property type="entry name" value="EPSP_synthase"/>
    <property type="match status" value="1"/>
</dbReference>
<dbReference type="SUPFAM" id="SSF55205">
    <property type="entry name" value="EPT/RTPC-like"/>
    <property type="match status" value="1"/>
</dbReference>
<reference key="1">
    <citation type="journal article" date="2005" name="Nucleic Acids Res.">
        <title>Genome dynamics and diversity of Shigella species, the etiologic agents of bacillary dysentery.</title>
        <authorList>
            <person name="Yang F."/>
            <person name="Yang J."/>
            <person name="Zhang X."/>
            <person name="Chen L."/>
            <person name="Jiang Y."/>
            <person name="Yan Y."/>
            <person name="Tang X."/>
            <person name="Wang J."/>
            <person name="Xiong Z."/>
            <person name="Dong J."/>
            <person name="Xue Y."/>
            <person name="Zhu Y."/>
            <person name="Xu X."/>
            <person name="Sun L."/>
            <person name="Chen S."/>
            <person name="Nie H."/>
            <person name="Peng J."/>
            <person name="Xu J."/>
            <person name="Wang Y."/>
            <person name="Yuan Z."/>
            <person name="Wen Y."/>
            <person name="Yao Z."/>
            <person name="Shen Y."/>
            <person name="Qiang B."/>
            <person name="Hou Y."/>
            <person name="Yu J."/>
            <person name="Jin Q."/>
        </authorList>
    </citation>
    <scope>NUCLEOTIDE SEQUENCE [LARGE SCALE GENOMIC DNA]</scope>
    <source>
        <strain>Ss046</strain>
    </source>
</reference>
<gene>
    <name evidence="1" type="primary">murA</name>
    <name type="ordered locus">SSON_3337</name>
</gene>
<accession>Q3YX52</accession>
<organism>
    <name type="scientific">Shigella sonnei (strain Ss046)</name>
    <dbReference type="NCBI Taxonomy" id="300269"/>
    <lineage>
        <taxon>Bacteria</taxon>
        <taxon>Pseudomonadati</taxon>
        <taxon>Pseudomonadota</taxon>
        <taxon>Gammaproteobacteria</taxon>
        <taxon>Enterobacterales</taxon>
        <taxon>Enterobacteriaceae</taxon>
        <taxon>Shigella</taxon>
    </lineage>
</organism>
<proteinExistence type="inferred from homology"/>